<organismHost>
    <name type="scientific">Homo sapiens</name>
    <name type="common">Human</name>
    <dbReference type="NCBI Taxonomy" id="9606"/>
</organismHost>
<organismHost>
    <name type="scientific">Pan troglodytes</name>
    <name type="common">Chimpanzee</name>
    <dbReference type="NCBI Taxonomy" id="9598"/>
</organismHost>
<organism>
    <name type="scientific">Hepatitis B virus genotype C subtype ad (isolate Japan/S-179/1988)</name>
    <name type="common">HBV-C</name>
    <dbReference type="NCBI Taxonomy" id="489468"/>
    <lineage>
        <taxon>Viruses</taxon>
        <taxon>Riboviria</taxon>
        <taxon>Pararnavirae</taxon>
        <taxon>Artverviricota</taxon>
        <taxon>Revtraviricetes</taxon>
        <taxon>Blubervirales</taxon>
        <taxon>Hepadnaviridae</taxon>
        <taxon>Orthohepadnavirus</taxon>
        <taxon>Hepatitis B virus</taxon>
        <taxon>hepatitis B virus genotype C</taxon>
    </lineage>
</organism>
<feature type="chain" id="PRO_0000222312" description="Capsid protein">
    <location>
        <begin position="1"/>
        <end position="183"/>
    </location>
</feature>
<feature type="repeat" description="1; half-length">
    <location>
        <begin position="155"/>
        <end position="161"/>
    </location>
</feature>
<feature type="repeat" description="2">
    <location>
        <begin position="162"/>
        <end position="169"/>
    </location>
</feature>
<feature type="repeat" description="3">
    <location>
        <begin position="170"/>
        <end position="177"/>
    </location>
</feature>
<feature type="region of interest" description="Disordered" evidence="2">
    <location>
        <begin position="136"/>
        <end position="183"/>
    </location>
</feature>
<feature type="region of interest" description="3 X 8 AA repeats of S-P-R-R-R-[PR]-S-Q">
    <location>
        <begin position="155"/>
        <end position="177"/>
    </location>
</feature>
<feature type="region of interest" description="RNA binding" evidence="1">
    <location>
        <begin position="177"/>
        <end position="183"/>
    </location>
</feature>
<feature type="short sequence motif" description="Bipartite nuclear localization signal" evidence="1">
    <location>
        <begin position="158"/>
        <end position="175"/>
    </location>
</feature>
<feature type="compositionally biased region" description="Basic residues" evidence="2">
    <location>
        <begin position="149"/>
        <end position="176"/>
    </location>
</feature>
<feature type="modified residue" description="Phosphoserine; by host" evidence="1">
    <location>
        <position position="155"/>
    </location>
</feature>
<feature type="modified residue" description="Phosphoserine; by host" evidence="1">
    <location>
        <position position="162"/>
    </location>
</feature>
<feature type="modified residue" description="Phosphoserine; by host" evidence="1">
    <location>
        <position position="170"/>
    </location>
</feature>
<comment type="function">
    <text evidence="1">Self assembles to form an icosahedral capsid. Most capsids appear to be large particles with an icosahedral symmetry of T=4 and consist of 240 copies of capsid protein, though a fraction forms smaller T=3 particles consisting of 180 capsid proteins. Entering capsids are transported along microtubules to the nucleus. Phosphorylation of the capsid is thought to induce exposure of nuclear localization signal in the C-terminal portion of the capsid protein that allows binding to the nuclear pore complex via the importin (karyopherin-) alpha and beta. Capsids are imported in intact form through the nuclear pore into the nuclear basket, where it probably binds NUP153. Only capsids that contain the mature viral genome can release the viral DNA and capsid protein into the nucleoplasm. Immature capsids get stuck in the basket. Capsids encapsulate the pre-genomic RNA and the P protein. Pre-genomic RNA is reverse-transcribed into DNA while the capsid is still in the cytoplasm. The capsid can then either be directed to the nucleus, providing more genomes for transcription, or bud through the endoplasmic reticulum to provide new virions.</text>
</comment>
<comment type="subunit">
    <text evidence="1">Homodimerizes, then multimerizes. Interacts with cytosol exposed regions of viral L glycoprotein present in the reticulum-to-Golgi compartment. Interacts with human FLNB. Phosphorylated form interacts with host importin alpha; this interaction depends on the exposure of the NLS, which itself depends upon genome maturation and/or phosphorylation of the capsid protein. Interacts with host NUP153.</text>
</comment>
<comment type="subcellular location">
    <subcellularLocation>
        <location evidence="1">Virion</location>
    </subcellularLocation>
    <subcellularLocation>
        <location evidence="1">Host cytoplasm</location>
    </subcellularLocation>
</comment>
<comment type="PTM">
    <text evidence="1">Phosphorylated by host SRPK1, SRPK2, and maybe protein kinase C or GAPDH. Phosphorylation is critical for pregenomic RNA packaging. Protein kinase C phosphorylation is stimulated by HBx protein and may play a role in transport of the viral genome to the nucleus at the late step during the viral replication cycle.</text>
</comment>
<comment type="similarity">
    <text evidence="1">Belongs to the orthohepadnavirus core antigen family.</text>
</comment>
<accession>P69708</accession>
<accession>P03150</accession>
<accession>P03151</accession>
<protein>
    <recommendedName>
        <fullName evidence="1">Capsid protein</fullName>
    </recommendedName>
    <alternativeName>
        <fullName evidence="1">Core antigen</fullName>
    </alternativeName>
    <alternativeName>
        <fullName evidence="1">Core protein</fullName>
    </alternativeName>
    <alternativeName>
        <fullName evidence="1">HBcAg</fullName>
    </alternativeName>
    <alternativeName>
        <fullName evidence="1">p21.5</fullName>
    </alternativeName>
</protein>
<proteinExistence type="inferred from homology"/>
<sequence length="183" mass="21095">MDIDPYKEFGASVELLSFLPSDFFPSIRDLLDTASALYREALESPEHCSPHHTALRQAILCWGELMNLATWVGSNLEDPASRELVVSYVNVNMGLKIRQLLWFHISCLTFGRETVLEYLVSFGVWIRTPPAYRPPNAPILSTLPETTVVRRRGRSPRRRTPSPRRRRSQSPRRRRSQSRESQC</sequence>
<name>CAPSD_HBVC5</name>
<reference key="1">
    <citation type="journal article" date="1983" name="Nucleic Acids Res.">
        <title>The complete nucleotide sequences of the cloned hepatitis B virus DNA; subtype adr and adw.</title>
        <authorList>
            <person name="Ono Y."/>
            <person name="Onda H."/>
            <person name="Sasada R."/>
            <person name="Igarashi K."/>
            <person name="Sugino Y."/>
            <person name="Nishioka K."/>
        </authorList>
    </citation>
    <scope>NUCLEOTIDE SEQUENCE [GENOMIC DNA]</scope>
</reference>
<gene>
    <name evidence="1" type="primary">C</name>
</gene>
<keyword id="KW-0167">Capsid protein</keyword>
<keyword id="KW-1176">Cytoplasmic inwards viral transport</keyword>
<keyword id="KW-0238">DNA-binding</keyword>
<keyword id="KW-1035">Host cytoplasm</keyword>
<keyword id="KW-0945">Host-virus interaction</keyword>
<keyword id="KW-1177">Microtubular inwards viral transport</keyword>
<keyword id="KW-0597">Phosphoprotein</keyword>
<keyword id="KW-0677">Repeat</keyword>
<keyword id="KW-0694">RNA-binding</keyword>
<keyword id="KW-1144">T=4 icosahedral capsid protein</keyword>
<keyword id="KW-1163">Viral penetration into host nucleus</keyword>
<keyword id="KW-0946">Virion</keyword>
<keyword id="KW-1160">Virus entry into host cell</keyword>
<dbReference type="EMBL" id="V00867">
    <property type="status" value="NOT_ANNOTATED_CDS"/>
    <property type="molecule type" value="Genomic_DNA"/>
</dbReference>
<dbReference type="SMR" id="P69708"/>
<dbReference type="GO" id="GO:0043657">
    <property type="term" value="C:host cell"/>
    <property type="evidence" value="ECO:0007669"/>
    <property type="project" value="GOC"/>
</dbReference>
<dbReference type="GO" id="GO:0030430">
    <property type="term" value="C:host cell cytoplasm"/>
    <property type="evidence" value="ECO:0007669"/>
    <property type="project" value="UniProtKB-SubCell"/>
</dbReference>
<dbReference type="GO" id="GO:0039619">
    <property type="term" value="C:T=4 icosahedral viral capsid"/>
    <property type="evidence" value="ECO:0007669"/>
    <property type="project" value="UniProtKB-UniRule"/>
</dbReference>
<dbReference type="GO" id="GO:0003677">
    <property type="term" value="F:DNA binding"/>
    <property type="evidence" value="ECO:0007669"/>
    <property type="project" value="UniProtKB-UniRule"/>
</dbReference>
<dbReference type="GO" id="GO:0003723">
    <property type="term" value="F:RNA binding"/>
    <property type="evidence" value="ECO:0007669"/>
    <property type="project" value="UniProtKB-UniRule"/>
</dbReference>
<dbReference type="GO" id="GO:0005198">
    <property type="term" value="F:structural molecule activity"/>
    <property type="evidence" value="ECO:0007669"/>
    <property type="project" value="UniProtKB-UniRule"/>
</dbReference>
<dbReference type="GO" id="GO:0075521">
    <property type="term" value="P:microtubule-dependent intracellular transport of viral material towards nucleus"/>
    <property type="evidence" value="ECO:0007669"/>
    <property type="project" value="UniProtKB-UniRule"/>
</dbReference>
<dbReference type="GO" id="GO:0046718">
    <property type="term" value="P:symbiont entry into host cell"/>
    <property type="evidence" value="ECO:0007669"/>
    <property type="project" value="UniProtKB-UniRule"/>
</dbReference>
<dbReference type="GO" id="GO:0075732">
    <property type="term" value="P:viral penetration into host nucleus"/>
    <property type="evidence" value="ECO:0007669"/>
    <property type="project" value="UniProtKB-UniRule"/>
</dbReference>
<dbReference type="FunFam" id="1.10.4090.10:FF:000001">
    <property type="entry name" value="Capsid protein"/>
    <property type="match status" value="1"/>
</dbReference>
<dbReference type="Gene3D" id="1.10.4090.10">
    <property type="entry name" value="Viral capsid, core domain supefamily, Hepatitis B virus"/>
    <property type="match status" value="1"/>
</dbReference>
<dbReference type="HAMAP" id="MF_04076">
    <property type="entry name" value="HBV_HBEAG"/>
    <property type="match status" value="1"/>
</dbReference>
<dbReference type="InterPro" id="IPR002006">
    <property type="entry name" value="Hepatitis_core"/>
</dbReference>
<dbReference type="InterPro" id="IPR036459">
    <property type="entry name" value="Viral_capsid_core_dom_sf_HBV"/>
</dbReference>
<dbReference type="Pfam" id="PF00906">
    <property type="entry name" value="Hepatitis_core"/>
    <property type="match status" value="3"/>
</dbReference>
<dbReference type="SUPFAM" id="SSF47852">
    <property type="entry name" value="Hepatitis B viral capsid (hbcag)"/>
    <property type="match status" value="1"/>
</dbReference>
<evidence type="ECO:0000255" key="1">
    <source>
        <dbReference type="HAMAP-Rule" id="MF_04076"/>
    </source>
</evidence>
<evidence type="ECO:0000256" key="2">
    <source>
        <dbReference type="SAM" id="MobiDB-lite"/>
    </source>
</evidence>